<dbReference type="EMBL" id="L36958">
    <property type="protein sequence ID" value="AAA85913.1"/>
    <property type="molecule type" value="Genomic_DNA"/>
</dbReference>
<dbReference type="EMBL" id="BA000022">
    <property type="protein sequence ID" value="BAA17801.1"/>
    <property type="molecule type" value="Genomic_DNA"/>
</dbReference>
<dbReference type="PIR" id="S74840">
    <property type="entry name" value="S74840"/>
</dbReference>
<dbReference type="SMR" id="P49995"/>
<dbReference type="FunCoup" id="P49995">
    <property type="interactions" value="335"/>
</dbReference>
<dbReference type="IntAct" id="P49995">
    <property type="interactions" value="2"/>
</dbReference>
<dbReference type="STRING" id="1148.gene:10498669"/>
<dbReference type="PaxDb" id="1148-1652883"/>
<dbReference type="EnsemblBacteria" id="BAA17801">
    <property type="protein sequence ID" value="BAA17801"/>
    <property type="gene ID" value="BAA17801"/>
</dbReference>
<dbReference type="KEGG" id="syn:sll0848"/>
<dbReference type="eggNOG" id="COG0593">
    <property type="taxonomic scope" value="Bacteria"/>
</dbReference>
<dbReference type="InParanoid" id="P49995"/>
<dbReference type="PhylomeDB" id="P49995"/>
<dbReference type="Proteomes" id="UP000001425">
    <property type="component" value="Chromosome"/>
</dbReference>
<dbReference type="GO" id="GO:0005737">
    <property type="term" value="C:cytoplasm"/>
    <property type="evidence" value="ECO:0007669"/>
    <property type="project" value="UniProtKB-SubCell"/>
</dbReference>
<dbReference type="GO" id="GO:0005886">
    <property type="term" value="C:plasma membrane"/>
    <property type="evidence" value="ECO:0000318"/>
    <property type="project" value="GO_Central"/>
</dbReference>
<dbReference type="GO" id="GO:0005524">
    <property type="term" value="F:ATP binding"/>
    <property type="evidence" value="ECO:0007669"/>
    <property type="project" value="UniProtKB-UniRule"/>
</dbReference>
<dbReference type="GO" id="GO:0016887">
    <property type="term" value="F:ATP hydrolysis activity"/>
    <property type="evidence" value="ECO:0007669"/>
    <property type="project" value="InterPro"/>
</dbReference>
<dbReference type="GO" id="GO:0003688">
    <property type="term" value="F:DNA replication origin binding"/>
    <property type="evidence" value="ECO:0000318"/>
    <property type="project" value="GO_Central"/>
</dbReference>
<dbReference type="GO" id="GO:0008289">
    <property type="term" value="F:lipid binding"/>
    <property type="evidence" value="ECO:0007669"/>
    <property type="project" value="UniProtKB-KW"/>
</dbReference>
<dbReference type="GO" id="GO:0006260">
    <property type="term" value="P:DNA replication"/>
    <property type="evidence" value="ECO:0000318"/>
    <property type="project" value="GO_Central"/>
</dbReference>
<dbReference type="GO" id="GO:0006270">
    <property type="term" value="P:DNA replication initiation"/>
    <property type="evidence" value="ECO:0000318"/>
    <property type="project" value="GO_Central"/>
</dbReference>
<dbReference type="GO" id="GO:0006275">
    <property type="term" value="P:regulation of DNA replication"/>
    <property type="evidence" value="ECO:0007669"/>
    <property type="project" value="UniProtKB-UniRule"/>
</dbReference>
<dbReference type="CDD" id="cd00009">
    <property type="entry name" value="AAA"/>
    <property type="match status" value="1"/>
</dbReference>
<dbReference type="CDD" id="cd06571">
    <property type="entry name" value="Bac_DnaA_C"/>
    <property type="match status" value="1"/>
</dbReference>
<dbReference type="FunFam" id="1.10.8.60:FF:000003">
    <property type="entry name" value="Chromosomal replication initiator protein DnaA"/>
    <property type="match status" value="1"/>
</dbReference>
<dbReference type="FunFam" id="3.40.50.300:FF:000668">
    <property type="entry name" value="Chromosomal replication initiator protein DnaA"/>
    <property type="match status" value="1"/>
</dbReference>
<dbReference type="Gene3D" id="1.10.1750.10">
    <property type="match status" value="1"/>
</dbReference>
<dbReference type="Gene3D" id="1.10.8.60">
    <property type="match status" value="1"/>
</dbReference>
<dbReference type="Gene3D" id="3.30.300.180">
    <property type="match status" value="1"/>
</dbReference>
<dbReference type="Gene3D" id="3.40.50.300">
    <property type="entry name" value="P-loop containing nucleotide triphosphate hydrolases"/>
    <property type="match status" value="1"/>
</dbReference>
<dbReference type="HAMAP" id="MF_00377">
    <property type="entry name" value="DnaA_bact"/>
    <property type="match status" value="1"/>
</dbReference>
<dbReference type="InterPro" id="IPR003593">
    <property type="entry name" value="AAA+_ATPase"/>
</dbReference>
<dbReference type="InterPro" id="IPR001957">
    <property type="entry name" value="Chromosome_initiator_DnaA"/>
</dbReference>
<dbReference type="InterPro" id="IPR020591">
    <property type="entry name" value="Chromosome_initiator_DnaA-like"/>
</dbReference>
<dbReference type="InterPro" id="IPR018312">
    <property type="entry name" value="Chromosome_initiator_DnaA_CS"/>
</dbReference>
<dbReference type="InterPro" id="IPR013159">
    <property type="entry name" value="DnaA_C"/>
</dbReference>
<dbReference type="InterPro" id="IPR013317">
    <property type="entry name" value="DnaA_dom"/>
</dbReference>
<dbReference type="InterPro" id="IPR024633">
    <property type="entry name" value="DnaA_N_dom"/>
</dbReference>
<dbReference type="InterPro" id="IPR038454">
    <property type="entry name" value="DnaA_N_sf"/>
</dbReference>
<dbReference type="InterPro" id="IPR027417">
    <property type="entry name" value="P-loop_NTPase"/>
</dbReference>
<dbReference type="InterPro" id="IPR010921">
    <property type="entry name" value="Trp_repressor/repl_initiator"/>
</dbReference>
<dbReference type="NCBIfam" id="TIGR00362">
    <property type="entry name" value="DnaA"/>
    <property type="match status" value="1"/>
</dbReference>
<dbReference type="PANTHER" id="PTHR30050">
    <property type="entry name" value="CHROMOSOMAL REPLICATION INITIATOR PROTEIN DNAA"/>
    <property type="match status" value="1"/>
</dbReference>
<dbReference type="PANTHER" id="PTHR30050:SF2">
    <property type="entry name" value="CHROMOSOMAL REPLICATION INITIATOR PROTEIN DNAA"/>
    <property type="match status" value="1"/>
</dbReference>
<dbReference type="Pfam" id="PF00308">
    <property type="entry name" value="Bac_DnaA"/>
    <property type="match status" value="1"/>
</dbReference>
<dbReference type="Pfam" id="PF08299">
    <property type="entry name" value="Bac_DnaA_C"/>
    <property type="match status" value="1"/>
</dbReference>
<dbReference type="Pfam" id="PF11638">
    <property type="entry name" value="DnaA_N"/>
    <property type="match status" value="1"/>
</dbReference>
<dbReference type="PRINTS" id="PR00051">
    <property type="entry name" value="DNAA"/>
</dbReference>
<dbReference type="SMART" id="SM00382">
    <property type="entry name" value="AAA"/>
    <property type="match status" value="1"/>
</dbReference>
<dbReference type="SMART" id="SM00760">
    <property type="entry name" value="Bac_DnaA_C"/>
    <property type="match status" value="1"/>
</dbReference>
<dbReference type="SUPFAM" id="SSF52540">
    <property type="entry name" value="P-loop containing nucleoside triphosphate hydrolases"/>
    <property type="match status" value="1"/>
</dbReference>
<dbReference type="SUPFAM" id="SSF48295">
    <property type="entry name" value="TrpR-like"/>
    <property type="match status" value="1"/>
</dbReference>
<dbReference type="PROSITE" id="PS01008">
    <property type="entry name" value="DNAA"/>
    <property type="match status" value="1"/>
</dbReference>
<protein>
    <recommendedName>
        <fullName evidence="1">Chromosomal replication initiator protein DnaA</fullName>
    </recommendedName>
</protein>
<organism>
    <name type="scientific">Synechocystis sp. (strain ATCC 27184 / PCC 6803 / Kazusa)</name>
    <dbReference type="NCBI Taxonomy" id="1111708"/>
    <lineage>
        <taxon>Bacteria</taxon>
        <taxon>Bacillati</taxon>
        <taxon>Cyanobacteriota</taxon>
        <taxon>Cyanophyceae</taxon>
        <taxon>Synechococcales</taxon>
        <taxon>Merismopediaceae</taxon>
        <taxon>Synechocystis</taxon>
    </lineage>
</organism>
<sequence length="447" mass="50050">MVSCENLWQQALAILATQLTKPAFDTWIKASVLISLGDGVATIQVENGFVLNHLQKSYGPLLMEVLTDLTGQEITVKLITDGLEPHSLIGQESSLPMETTPKNATALNGKYTFSRFVVGPTNRMAHAASLAVAESPGREFNPLFLCGGVGLGKTHLMQAIAHYRLEMYPNAKVYYVSTERFTNDLITAIRQDNMEDFRSYYRSADFLLIDDIQFIKGKEYTQEEFFHTFNSLHEAGKQVVVASDRAPQRIPGLQDRLISRFSMGLIADIQVPDLETRMAILQKKAEYDRIRLPKEVIEYIASHYTSNIRELEGALIRAIAYTSLSNVAMTVENIAPVLNPPVEKVAAAPETIITIVAQHYQLKVEELLSNSRRREVSLARQVGMYLMRQHTDLSLPRIGEAFGGKDHTTVMYSCDKITQLQQKDWETSQTLTSLSHRINIAGQAPES</sequence>
<gene>
    <name evidence="1" type="primary">dnaA</name>
    <name type="ordered locus">sll0848</name>
</gene>
<comment type="function">
    <text evidence="1">Plays an essential role in the initiation and regulation of chromosomal replication. ATP-DnaA binds to the origin of replication (oriC) to initiate formation of the DNA replication initiation complex once per cell cycle. Binds the DnaA box (a 9 base pair repeat at the origin) and separates the double-stranded (ds)DNA. Forms a right-handed helical filament on oriC DNA; dsDNA binds to the exterior of the filament while single-stranded (ss)DNA is stabiized in the filament's interior. The ATP-DnaA-oriC complex binds and stabilizes one strand of the AT-rich DNA unwinding element (DUE), permitting loading of DNA polymerase. After initiation quickly degrades to an ADP-DnaA complex that is not apt for DNA replication. Binds acidic phospholipids.</text>
</comment>
<comment type="function">
    <text evidence="2">Isolated domain IV (residues 348-447) binds both E.coli and B.subtilis oriC.</text>
</comment>
<comment type="subunit">
    <text evidence="1">Oligomerizes as a right-handed, spiral filament on DNA at oriC.</text>
</comment>
<comment type="subcellular location">
    <subcellularLocation>
        <location evidence="1">Cytoplasm</location>
    </subcellularLocation>
</comment>
<comment type="domain">
    <text evidence="1">Domain I is involved in oligomerization and binding regulators, domain II is flexibile and of varying length in different bacteria, domain III forms the AAA+ region, while domain IV binds dsDNA.</text>
</comment>
<comment type="similarity">
    <text evidence="1 3">Belongs to the DnaA family.</text>
</comment>
<keyword id="KW-0067">ATP-binding</keyword>
<keyword id="KW-0963">Cytoplasm</keyword>
<keyword id="KW-0235">DNA replication</keyword>
<keyword id="KW-0238">DNA-binding</keyword>
<keyword id="KW-0446">Lipid-binding</keyword>
<keyword id="KW-0547">Nucleotide-binding</keyword>
<keyword id="KW-1185">Reference proteome</keyword>
<evidence type="ECO:0000255" key="1">
    <source>
        <dbReference type="HAMAP-Rule" id="MF_00377"/>
    </source>
</evidence>
<evidence type="ECO:0000269" key="2">
    <source>
    </source>
</evidence>
<evidence type="ECO:0000305" key="3"/>
<feature type="chain" id="PRO_0000114285" description="Chromosomal replication initiator protein DnaA">
    <location>
        <begin position="1"/>
        <end position="447"/>
    </location>
</feature>
<feature type="region of interest" description="Domain I, interacts with DnaA modulators" evidence="1">
    <location>
        <begin position="1"/>
        <end position="79"/>
    </location>
</feature>
<feature type="region of interest" description="Domain II" evidence="1">
    <location>
        <begin position="79"/>
        <end position="105"/>
    </location>
</feature>
<feature type="region of interest" description="Domain III, AAA+ region" evidence="1">
    <location>
        <begin position="106"/>
        <end position="322"/>
    </location>
</feature>
<feature type="region of interest" description="Domain IV, binds dsDNA" evidence="1 2">
    <location>
        <begin position="323"/>
        <end position="447"/>
    </location>
</feature>
<feature type="binding site" evidence="1">
    <location>
        <position position="150"/>
    </location>
    <ligand>
        <name>ATP</name>
        <dbReference type="ChEBI" id="CHEBI:30616"/>
    </ligand>
</feature>
<feature type="binding site" evidence="1">
    <location>
        <position position="152"/>
    </location>
    <ligand>
        <name>ATP</name>
        <dbReference type="ChEBI" id="CHEBI:30616"/>
    </ligand>
</feature>
<feature type="binding site" evidence="1">
    <location>
        <position position="153"/>
    </location>
    <ligand>
        <name>ATP</name>
        <dbReference type="ChEBI" id="CHEBI:30616"/>
    </ligand>
</feature>
<feature type="binding site" evidence="1">
    <location>
        <position position="154"/>
    </location>
    <ligand>
        <name>ATP</name>
        <dbReference type="ChEBI" id="CHEBI:30616"/>
    </ligand>
</feature>
<feature type="sequence conflict" description="In Ref. 1; AAA85913." evidence="3" ref="1">
    <original>VGPTNRMA</original>
    <variation>WAHQSHG</variation>
    <location>
        <begin position="118"/>
        <end position="125"/>
    </location>
</feature>
<feature type="sequence conflict" description="In Ref. 1; AAA85913." evidence="3" ref="1">
    <original>I</original>
    <variation>M</variation>
    <location>
        <position position="297"/>
    </location>
</feature>
<name>DNAA_SYNY3</name>
<proteinExistence type="evidence at protein level"/>
<accession>P49995</accession>
<accession>P73750</accession>
<reference key="1">
    <citation type="journal article" date="1995" name="J. Bacteriol.">
        <title>Genetic structure of the dnaA region of the cyanobacterium Synechocystis sp. strain PCC6803.</title>
        <authorList>
            <person name="Richter S."/>
            <person name="Messer W."/>
        </authorList>
    </citation>
    <scope>NUCLEOTIDE SEQUENCE [GENOMIC DNA]</scope>
    <source>
        <strain>ATCC 27184 / PCC 6803 / Kazusa</strain>
    </source>
</reference>
<reference key="2">
    <citation type="journal article" date="1996" name="DNA Res.">
        <title>Sequence analysis of the genome of the unicellular cyanobacterium Synechocystis sp. strain PCC6803. II. Sequence determination of the entire genome and assignment of potential protein-coding regions.</title>
        <authorList>
            <person name="Kaneko T."/>
            <person name="Sato S."/>
            <person name="Kotani H."/>
            <person name="Tanaka A."/>
            <person name="Asamizu E."/>
            <person name="Nakamura Y."/>
            <person name="Miyajima N."/>
            <person name="Hirosawa M."/>
            <person name="Sugiura M."/>
            <person name="Sasamoto S."/>
            <person name="Kimura T."/>
            <person name="Hosouchi T."/>
            <person name="Matsuno A."/>
            <person name="Muraki A."/>
            <person name="Nakazaki N."/>
            <person name="Naruo K."/>
            <person name="Okumura S."/>
            <person name="Shimpo S."/>
            <person name="Takeuchi C."/>
            <person name="Wada T."/>
            <person name="Watanabe A."/>
            <person name="Yamada M."/>
            <person name="Yasuda M."/>
            <person name="Tabata S."/>
        </authorList>
    </citation>
    <scope>NUCLEOTIDE SEQUENCE [LARGE SCALE GENOMIC DNA]</scope>
    <source>
        <strain>ATCC 27184 / PCC 6803 / Kazusa</strain>
    </source>
</reference>
<reference key="3">
    <citation type="journal article" date="1998" name="Mol. Gen. Genet.">
        <title>Unique organization of the dnaA region from Prochlorococcus marinus CCMP1375, a marine cyanobacterium.</title>
        <authorList>
            <person name="Richter S."/>
            <person name="Hess W.R."/>
            <person name="Krause M."/>
            <person name="Messer W."/>
        </authorList>
    </citation>
    <scope>DOMAIN</scope>
    <scope>DNA-BINDING</scope>
    <source>
        <strain>ATCC 27184 / PCC 6803 / Kazusa</strain>
    </source>
</reference>